<sequence length="215" mass="23786">MSSAVIFVESATPGTLTEFKDLLAKQLLEVRETWSLEFRTYRTLVKDFPSREKLLYSLTFPHHDKKTVLIRNSLAWVLGTAEIPDNLQTCSTGLSESIDQLLASKLSNMWAQRQVIRGDAGQTLLITGDVTVRIINLFAATGFKGLLIELDNLQSATSLANITDLLNEMKVKVFKVASAPGLKSEDVEVVDSSSTMESGNEALFTLAKQYIEVLE</sequence>
<feature type="chain" id="PRO_0000308564" description="Mediator of RNA polymerase II transcription subunit 20">
    <location>
        <begin position="1"/>
        <end position="215"/>
    </location>
</feature>
<comment type="function">
    <text evidence="1">Component of the Mediator complex, a coactivator involved in the regulated transcription of nearly all RNA polymerase II-dependent genes. Mediator functions as a bridge to convey information from gene-specific regulatory proteins to the basal RNA polymerase II transcription machinery. Mediator is recruited to promoters by direct interactions with regulatory proteins and serves as a scaffold for the assembly of a functional preinitiation complex with RNA polymerase II and the general transcription factors (By similarity).</text>
</comment>
<comment type="subunit">
    <text evidence="1">Component of the Mediator complex.</text>
</comment>
<comment type="subcellular location">
    <subcellularLocation>
        <location evidence="1">Nucleus</location>
    </subcellularLocation>
</comment>
<comment type="similarity">
    <text evidence="2">Belongs to the Mediator complex subunit 20 family.</text>
</comment>
<dbReference type="EMBL" id="CR380950">
    <property type="protein sequence ID" value="CAG58507.2"/>
    <property type="molecule type" value="Genomic_DNA"/>
</dbReference>
<dbReference type="RefSeq" id="XP_445596.2">
    <property type="nucleotide sequence ID" value="XM_445596.2"/>
</dbReference>
<dbReference type="SMR" id="Q6FVZ8"/>
<dbReference type="FunCoup" id="Q6FVZ8">
    <property type="interactions" value="280"/>
</dbReference>
<dbReference type="STRING" id="284593.Q6FVZ8"/>
<dbReference type="EnsemblFungi" id="CAGL0D04136g-T">
    <property type="protein sequence ID" value="CAGL0D04136g-T-p1"/>
    <property type="gene ID" value="CAGL0D04136g"/>
</dbReference>
<dbReference type="KEGG" id="cgr:2887190"/>
<dbReference type="CGD" id="CAL0128505">
    <property type="gene designation" value="CAGL0D04136g"/>
</dbReference>
<dbReference type="VEuPathDB" id="FungiDB:CAGL0D04136g"/>
<dbReference type="eggNOG" id="ENOG502RXMU">
    <property type="taxonomic scope" value="Eukaryota"/>
</dbReference>
<dbReference type="HOGENOM" id="CLU_065844_1_0_1"/>
<dbReference type="InParanoid" id="Q6FVZ8"/>
<dbReference type="OMA" id="WTQRQSI"/>
<dbReference type="Proteomes" id="UP000002428">
    <property type="component" value="Chromosome D"/>
</dbReference>
<dbReference type="GO" id="GO:0016592">
    <property type="term" value="C:mediator complex"/>
    <property type="evidence" value="ECO:0007669"/>
    <property type="project" value="InterPro"/>
</dbReference>
<dbReference type="GO" id="GO:0003712">
    <property type="term" value="F:transcription coregulator activity"/>
    <property type="evidence" value="ECO:0007669"/>
    <property type="project" value="InterPro"/>
</dbReference>
<dbReference type="GO" id="GO:0006357">
    <property type="term" value="P:regulation of transcription by RNA polymerase II"/>
    <property type="evidence" value="ECO:0007669"/>
    <property type="project" value="InterPro"/>
</dbReference>
<dbReference type="Gene3D" id="3.30.310.180">
    <property type="match status" value="1"/>
</dbReference>
<dbReference type="InterPro" id="IPR013921">
    <property type="entry name" value="Mediator_Med20"/>
</dbReference>
<dbReference type="Pfam" id="PF08612">
    <property type="entry name" value="Med20"/>
    <property type="match status" value="1"/>
</dbReference>
<accession>Q6FVZ8</accession>
<proteinExistence type="inferred from homology"/>
<protein>
    <recommendedName>
        <fullName>Mediator of RNA polymerase II transcription subunit 20</fullName>
    </recommendedName>
    <alternativeName>
        <fullName>Mediator complex subunit 20</fullName>
    </alternativeName>
</protein>
<reference key="1">
    <citation type="journal article" date="2004" name="Nature">
        <title>Genome evolution in yeasts.</title>
        <authorList>
            <person name="Dujon B."/>
            <person name="Sherman D."/>
            <person name="Fischer G."/>
            <person name="Durrens P."/>
            <person name="Casaregola S."/>
            <person name="Lafontaine I."/>
            <person name="de Montigny J."/>
            <person name="Marck C."/>
            <person name="Neuveglise C."/>
            <person name="Talla E."/>
            <person name="Goffard N."/>
            <person name="Frangeul L."/>
            <person name="Aigle M."/>
            <person name="Anthouard V."/>
            <person name="Babour A."/>
            <person name="Barbe V."/>
            <person name="Barnay S."/>
            <person name="Blanchin S."/>
            <person name="Beckerich J.-M."/>
            <person name="Beyne E."/>
            <person name="Bleykasten C."/>
            <person name="Boisrame A."/>
            <person name="Boyer J."/>
            <person name="Cattolico L."/>
            <person name="Confanioleri F."/>
            <person name="de Daruvar A."/>
            <person name="Despons L."/>
            <person name="Fabre E."/>
            <person name="Fairhead C."/>
            <person name="Ferry-Dumazet H."/>
            <person name="Groppi A."/>
            <person name="Hantraye F."/>
            <person name="Hennequin C."/>
            <person name="Jauniaux N."/>
            <person name="Joyet P."/>
            <person name="Kachouri R."/>
            <person name="Kerrest A."/>
            <person name="Koszul R."/>
            <person name="Lemaire M."/>
            <person name="Lesur I."/>
            <person name="Ma L."/>
            <person name="Muller H."/>
            <person name="Nicaud J.-M."/>
            <person name="Nikolski M."/>
            <person name="Oztas S."/>
            <person name="Ozier-Kalogeropoulos O."/>
            <person name="Pellenz S."/>
            <person name="Potier S."/>
            <person name="Richard G.-F."/>
            <person name="Straub M.-L."/>
            <person name="Suleau A."/>
            <person name="Swennen D."/>
            <person name="Tekaia F."/>
            <person name="Wesolowski-Louvel M."/>
            <person name="Westhof E."/>
            <person name="Wirth B."/>
            <person name="Zeniou-Meyer M."/>
            <person name="Zivanovic Y."/>
            <person name="Bolotin-Fukuhara M."/>
            <person name="Thierry A."/>
            <person name="Bouchier C."/>
            <person name="Caudron B."/>
            <person name="Scarpelli C."/>
            <person name="Gaillardin C."/>
            <person name="Weissenbach J."/>
            <person name="Wincker P."/>
            <person name="Souciet J.-L."/>
        </authorList>
    </citation>
    <scope>NUCLEOTIDE SEQUENCE [LARGE SCALE GENOMIC DNA]</scope>
    <source>
        <strain>ATCC 2001 / BCRC 20586 / JCM 3761 / NBRC 0622 / NRRL Y-65 / CBS 138</strain>
    </source>
</reference>
<name>MED20_CANGA</name>
<gene>
    <name type="primary">SRB2</name>
    <name type="synonym">MED20</name>
    <name type="ordered locus">CAGL0D04136g</name>
</gene>
<evidence type="ECO:0000250" key="1"/>
<evidence type="ECO:0000305" key="2"/>
<keyword id="KW-0010">Activator</keyword>
<keyword id="KW-0539">Nucleus</keyword>
<keyword id="KW-1185">Reference proteome</keyword>
<keyword id="KW-0804">Transcription</keyword>
<keyword id="KW-0805">Transcription regulation</keyword>
<organism>
    <name type="scientific">Candida glabrata (strain ATCC 2001 / BCRC 20586 / JCM 3761 / NBRC 0622 / NRRL Y-65 / CBS 138)</name>
    <name type="common">Yeast</name>
    <name type="synonym">Nakaseomyces glabratus</name>
    <dbReference type="NCBI Taxonomy" id="284593"/>
    <lineage>
        <taxon>Eukaryota</taxon>
        <taxon>Fungi</taxon>
        <taxon>Dikarya</taxon>
        <taxon>Ascomycota</taxon>
        <taxon>Saccharomycotina</taxon>
        <taxon>Saccharomycetes</taxon>
        <taxon>Saccharomycetales</taxon>
        <taxon>Saccharomycetaceae</taxon>
        <taxon>Nakaseomyces</taxon>
    </lineage>
</organism>